<evidence type="ECO:0000255" key="1"/>
<evidence type="ECO:0000269" key="2">
    <source>
    </source>
</evidence>
<evidence type="ECO:0000269" key="3">
    <source>
    </source>
</evidence>
<evidence type="ECO:0000269" key="4">
    <source>
    </source>
</evidence>
<evidence type="ECO:0000269" key="5">
    <source>
    </source>
</evidence>
<evidence type="ECO:0000305" key="6"/>
<comment type="interaction">
    <interactant intactId="EBI-4314891">
        <id>Q15238</id>
    </interactant>
    <interactant intactId="EBI-2256865">
        <id>P35590</id>
        <label>TIE1</label>
    </interactant>
    <organismsDiffer>false</organismsDiffer>
    <experiments>3</experiments>
</comment>
<comment type="subcellular location">
    <subcellularLocation>
        <location evidence="6">Secreted</location>
    </subcellularLocation>
</comment>
<comment type="tissue specificity">
    <text>Synthesized by syncytiotrophoblast of the placenta.</text>
</comment>
<comment type="developmental stage">
    <text>PSBG are produced in high quantity during pregnancy.</text>
</comment>
<comment type="similarity">
    <text evidence="6">Belongs to the immunoglobulin superfamily. CEA family.</text>
</comment>
<protein>
    <recommendedName>
        <fullName>Pregnancy-specific beta-1-glycoprotein 5</fullName>
        <shortName>PS-beta-G-5</shortName>
        <shortName>PSBG-5</shortName>
        <shortName>Pregnancy-specific glycoprotein 5</shortName>
    </recommendedName>
    <alternativeName>
        <fullName>Fetal liver non-specific cross-reactive antigen 3</fullName>
        <shortName>FL-NCA-3</shortName>
    </alternativeName>
</protein>
<dbReference type="EMBL" id="M73713">
    <property type="protein sequence ID" value="AAA60205.1"/>
    <property type="molecule type" value="mRNA"/>
</dbReference>
<dbReference type="EMBL" id="M25384">
    <property type="protein sequence ID" value="AAA36514.1"/>
    <property type="molecule type" value="mRNA"/>
</dbReference>
<dbReference type="EMBL" id="AC005392">
    <property type="status" value="NOT_ANNOTATED_CDS"/>
    <property type="molecule type" value="Genomic_DNA"/>
</dbReference>
<dbReference type="EMBL" id="BC012607">
    <property type="protein sequence ID" value="AAH12607.1"/>
    <property type="molecule type" value="mRNA"/>
</dbReference>
<dbReference type="EMBL" id="AH007626">
    <property type="protein sequence ID" value="AAD28500.1"/>
    <property type="molecule type" value="Genomic_DNA"/>
</dbReference>
<dbReference type="CCDS" id="CCDS12617.1"/>
<dbReference type="PIR" id="A33514">
    <property type="entry name" value="A33514"/>
</dbReference>
<dbReference type="PIR" id="B33251">
    <property type="entry name" value="B33251"/>
</dbReference>
<dbReference type="PIR" id="C54312">
    <property type="entry name" value="C54312"/>
</dbReference>
<dbReference type="RefSeq" id="NP_001123486.1">
    <property type="nucleotide sequence ID" value="NM_001130014.2"/>
</dbReference>
<dbReference type="RefSeq" id="NP_002772.3">
    <property type="nucleotide sequence ID" value="NM_002781.3"/>
</dbReference>
<dbReference type="RefSeq" id="XP_016882492.1">
    <property type="nucleotide sequence ID" value="XM_017027003.2"/>
</dbReference>
<dbReference type="SMR" id="Q15238"/>
<dbReference type="BioGRID" id="111648">
    <property type="interactions" value="4"/>
</dbReference>
<dbReference type="FunCoup" id="Q15238">
    <property type="interactions" value="5"/>
</dbReference>
<dbReference type="IntAct" id="Q15238">
    <property type="interactions" value="3"/>
</dbReference>
<dbReference type="MINT" id="Q15238"/>
<dbReference type="STRING" id="9606.ENSP00000382334"/>
<dbReference type="DrugBank" id="DB00523">
    <property type="generic name" value="Alitretinoin"/>
</dbReference>
<dbReference type="GlyCosmos" id="Q15238">
    <property type="glycosylation" value="4 sites, No reported glycans"/>
</dbReference>
<dbReference type="GlyGen" id="Q15238">
    <property type="glycosylation" value="5 sites, 1 O-linked glycan (1 site)"/>
</dbReference>
<dbReference type="iPTMnet" id="Q15238"/>
<dbReference type="PhosphoSitePlus" id="Q15238"/>
<dbReference type="BioMuta" id="PSG5"/>
<dbReference type="DMDM" id="311033414"/>
<dbReference type="jPOST" id="Q15238"/>
<dbReference type="MassIVE" id="Q15238"/>
<dbReference type="PaxDb" id="9606-ENSP00000382334"/>
<dbReference type="PeptideAtlas" id="Q15238"/>
<dbReference type="ProteomicsDB" id="60495"/>
<dbReference type="Antibodypedia" id="21553">
    <property type="antibodies" value="55 antibodies from 15 providers"/>
</dbReference>
<dbReference type="DNASU" id="5673"/>
<dbReference type="Ensembl" id="ENST00000342951.11">
    <property type="protein sequence ID" value="ENSP00000344413.6"/>
    <property type="gene ID" value="ENSG00000204941.14"/>
</dbReference>
<dbReference type="Ensembl" id="ENST00000366175.7">
    <property type="protein sequence ID" value="ENSP00000382334.2"/>
    <property type="gene ID" value="ENSG00000204941.14"/>
</dbReference>
<dbReference type="Ensembl" id="ENST00000407356.5">
    <property type="protein sequence ID" value="ENSP00000386008.1"/>
    <property type="gene ID" value="ENSG00000204941.14"/>
</dbReference>
<dbReference type="GeneID" id="5673"/>
<dbReference type="KEGG" id="hsa:5673"/>
<dbReference type="MANE-Select" id="ENST00000342951.11">
    <property type="protein sequence ID" value="ENSP00000344413.6"/>
    <property type="RefSeq nucleotide sequence ID" value="NM_002781.4"/>
    <property type="RefSeq protein sequence ID" value="NP_002772.3"/>
</dbReference>
<dbReference type="UCSC" id="uc002ovu.4">
    <property type="organism name" value="human"/>
</dbReference>
<dbReference type="AGR" id="HGNC:9522"/>
<dbReference type="CTD" id="5673"/>
<dbReference type="DisGeNET" id="5673"/>
<dbReference type="GeneCards" id="PSG5"/>
<dbReference type="HGNC" id="HGNC:9522">
    <property type="gene designation" value="PSG5"/>
</dbReference>
<dbReference type="HPA" id="ENSG00000204941">
    <property type="expression patterns" value="Tissue enriched (placenta)"/>
</dbReference>
<dbReference type="MIM" id="176394">
    <property type="type" value="gene"/>
</dbReference>
<dbReference type="neXtProt" id="NX_Q15238"/>
<dbReference type="OpenTargets" id="ENSG00000204941"/>
<dbReference type="PharmGKB" id="PA33867"/>
<dbReference type="VEuPathDB" id="HostDB:ENSG00000204941"/>
<dbReference type="eggNOG" id="ENOG502RWXZ">
    <property type="taxonomic scope" value="Eukaryota"/>
</dbReference>
<dbReference type="GeneTree" id="ENSGT01100000263479"/>
<dbReference type="InParanoid" id="Q15238"/>
<dbReference type="OMA" id="XTDESST"/>
<dbReference type="OrthoDB" id="9479347at2759"/>
<dbReference type="PAN-GO" id="Q15238">
    <property type="GO annotations" value="2 GO annotations based on evolutionary models"/>
</dbReference>
<dbReference type="PhylomeDB" id="Q15238"/>
<dbReference type="TreeFam" id="TF336859"/>
<dbReference type="PathwayCommons" id="Q15238"/>
<dbReference type="Reactome" id="R-HSA-202733">
    <property type="pathway name" value="Cell surface interactions at the vascular wall"/>
</dbReference>
<dbReference type="SignaLink" id="Q15238"/>
<dbReference type="BioGRID-ORCS" id="5673">
    <property type="hits" value="34 hits in 1098 CRISPR screens"/>
</dbReference>
<dbReference type="ChiTaRS" id="PSG5">
    <property type="organism name" value="human"/>
</dbReference>
<dbReference type="GeneWiki" id="PSG5"/>
<dbReference type="GenomeRNAi" id="5673"/>
<dbReference type="Pharos" id="Q15238">
    <property type="development level" value="Tbio"/>
</dbReference>
<dbReference type="PRO" id="PR:Q15238"/>
<dbReference type="Proteomes" id="UP000005640">
    <property type="component" value="Chromosome 19"/>
</dbReference>
<dbReference type="RNAct" id="Q15238">
    <property type="molecule type" value="protein"/>
</dbReference>
<dbReference type="Bgee" id="ENSG00000204941">
    <property type="expression patterns" value="Expressed in placenta and 126 other cell types or tissues"/>
</dbReference>
<dbReference type="ExpressionAtlas" id="Q15238">
    <property type="expression patterns" value="baseline and differential"/>
</dbReference>
<dbReference type="GO" id="GO:0009986">
    <property type="term" value="C:cell surface"/>
    <property type="evidence" value="ECO:0000318"/>
    <property type="project" value="GO_Central"/>
</dbReference>
<dbReference type="GO" id="GO:0005576">
    <property type="term" value="C:extracellular region"/>
    <property type="evidence" value="ECO:0007669"/>
    <property type="project" value="UniProtKB-SubCell"/>
</dbReference>
<dbReference type="GO" id="GO:0007565">
    <property type="term" value="P:female pregnancy"/>
    <property type="evidence" value="ECO:0000304"/>
    <property type="project" value="ProtInc"/>
</dbReference>
<dbReference type="GO" id="GO:0007157">
    <property type="term" value="P:heterophilic cell-cell adhesion via plasma membrane cell adhesion molecules"/>
    <property type="evidence" value="ECO:0000318"/>
    <property type="project" value="GO_Central"/>
</dbReference>
<dbReference type="CDD" id="cd20948">
    <property type="entry name" value="IgC2_CEACAM5-like"/>
    <property type="match status" value="1"/>
</dbReference>
<dbReference type="CDD" id="cd05740">
    <property type="entry name" value="IgI_hCEACAM_2_4_6_like"/>
    <property type="match status" value="1"/>
</dbReference>
<dbReference type="CDD" id="cd05774">
    <property type="entry name" value="IgV_CEACAM_D1"/>
    <property type="match status" value="1"/>
</dbReference>
<dbReference type="FunFam" id="2.60.40.10:FF:000340">
    <property type="entry name" value="Carcinoembryonic antigen-related cell adhesion molecule 1"/>
    <property type="match status" value="1"/>
</dbReference>
<dbReference type="FunFam" id="2.60.40.10:FF:000517">
    <property type="entry name" value="Carcinoembryonic antigen-related cell adhesion molecule 1"/>
    <property type="match status" value="1"/>
</dbReference>
<dbReference type="FunFam" id="2.60.40.10:FF:000244">
    <property type="entry name" value="carcinoembryonic antigen-related cell adhesion molecule 16"/>
    <property type="match status" value="1"/>
</dbReference>
<dbReference type="Gene3D" id="2.60.40.10">
    <property type="entry name" value="Immunoglobulins"/>
    <property type="match status" value="3"/>
</dbReference>
<dbReference type="InterPro" id="IPR050831">
    <property type="entry name" value="CEA_cell_adhesion"/>
</dbReference>
<dbReference type="InterPro" id="IPR007110">
    <property type="entry name" value="Ig-like_dom"/>
</dbReference>
<dbReference type="InterPro" id="IPR036179">
    <property type="entry name" value="Ig-like_dom_sf"/>
</dbReference>
<dbReference type="InterPro" id="IPR013783">
    <property type="entry name" value="Ig-like_fold"/>
</dbReference>
<dbReference type="InterPro" id="IPR003599">
    <property type="entry name" value="Ig_sub"/>
</dbReference>
<dbReference type="InterPro" id="IPR003598">
    <property type="entry name" value="Ig_sub2"/>
</dbReference>
<dbReference type="InterPro" id="IPR013106">
    <property type="entry name" value="Ig_V-set"/>
</dbReference>
<dbReference type="PANTHER" id="PTHR44427">
    <property type="entry name" value="CARCINOEMBRYONIC ANTIGEN-RELATED CELL ADHESION MOLECULE 19"/>
    <property type="match status" value="1"/>
</dbReference>
<dbReference type="PANTHER" id="PTHR44427:SF32">
    <property type="entry name" value="IG-LIKE DOMAIN-CONTAINING PROTEIN"/>
    <property type="match status" value="1"/>
</dbReference>
<dbReference type="Pfam" id="PF13895">
    <property type="entry name" value="Ig_2"/>
    <property type="match status" value="1"/>
</dbReference>
<dbReference type="Pfam" id="PF13927">
    <property type="entry name" value="Ig_3"/>
    <property type="match status" value="1"/>
</dbReference>
<dbReference type="Pfam" id="PF07686">
    <property type="entry name" value="V-set"/>
    <property type="match status" value="1"/>
</dbReference>
<dbReference type="SMART" id="SM00409">
    <property type="entry name" value="IG"/>
    <property type="match status" value="3"/>
</dbReference>
<dbReference type="SMART" id="SM00408">
    <property type="entry name" value="IGc2"/>
    <property type="match status" value="2"/>
</dbReference>
<dbReference type="SUPFAM" id="SSF48726">
    <property type="entry name" value="Immunoglobulin"/>
    <property type="match status" value="3"/>
</dbReference>
<dbReference type="PROSITE" id="PS50835">
    <property type="entry name" value="IG_LIKE"/>
    <property type="match status" value="2"/>
</dbReference>
<feature type="signal peptide" evidence="1">
    <location>
        <begin position="1"/>
        <end position="34"/>
    </location>
</feature>
<feature type="chain" id="PRO_0000014912" description="Pregnancy-specific beta-1-glycoprotein 5">
    <location>
        <begin position="35"/>
        <end position="335"/>
    </location>
</feature>
<feature type="domain" description="Ig-like V-type">
    <location>
        <begin position="35"/>
        <end position="144"/>
    </location>
</feature>
<feature type="domain" description="Ig-like C2-type 1">
    <location>
        <begin position="147"/>
        <end position="234"/>
    </location>
</feature>
<feature type="domain" description="Ig-like C2-type 2">
    <location>
        <begin position="239"/>
        <end position="317"/>
    </location>
</feature>
<feature type="short sequence motif" description="Cell attachment site" evidence="1">
    <location>
        <begin position="127"/>
        <end position="129"/>
    </location>
</feature>
<feature type="glycosylation site" description="N-linked (GlcNAc...) asparagine" evidence="1">
    <location>
        <position position="104"/>
    </location>
</feature>
<feature type="glycosylation site" description="N-linked (GlcNAc...) asparagine" evidence="1">
    <location>
        <position position="111"/>
    </location>
</feature>
<feature type="glycosylation site" description="N-linked (GlcNAc...) asparagine" evidence="1">
    <location>
        <position position="175"/>
    </location>
</feature>
<feature type="glycosylation site" description="N-linked (GlcNAc...) asparagine" evidence="1">
    <location>
        <position position="210"/>
    </location>
</feature>
<feature type="disulfide bond" evidence="6">
    <location>
        <begin position="169"/>
        <end position="217"/>
    </location>
</feature>
<feature type="disulfide bond" evidence="6">
    <location>
        <begin position="261"/>
        <end position="301"/>
    </location>
</feature>
<feature type="sequence variant" id="VAR_060260" description="In dbSNP:rs8107936." evidence="2 3 4 5">
    <original>L</original>
    <variation>V</variation>
    <location>
        <position position="18"/>
    </location>
</feature>
<feature type="sequence variant" id="VAR_016041" description="In dbSNP:rs1058259." evidence="3 4">
    <original>N</original>
    <variation>K</variation>
    <location>
        <position position="154"/>
    </location>
</feature>
<feature type="sequence variant" id="VAR_060261" description="In dbSNP:rs5013158.">
    <original>T</original>
    <variation>I</variation>
    <location>
        <position position="168"/>
    </location>
</feature>
<feature type="sequence variant" id="VAR_060262" description="In dbSNP:rs1058285." evidence="2 3 4 5">
    <original>R</original>
    <variation>H</variation>
    <location>
        <position position="227"/>
    </location>
</feature>
<feature type="sequence conflict" description="In Ref. 2; AAA60205." evidence="6" ref="2">
    <original>W</original>
    <variation>C</variation>
    <location>
        <position position="15"/>
    </location>
</feature>
<feature type="sequence conflict" description="In Ref. 3; AAA36514." evidence="6" ref="3">
    <original>L</original>
    <variation>V</variation>
    <location>
        <position position="20"/>
    </location>
</feature>
<feature type="sequence conflict" description="In Ref. 1; no nucleotide entry and 5; AAH12607." evidence="6" ref="1 5">
    <original>R</original>
    <variation>Q</variation>
    <location>
        <position position="195"/>
    </location>
</feature>
<feature type="sequence conflict" description="In Ref. 2; AAA60205 and 3; AAA36514." evidence="6" ref="2 3">
    <original>T</original>
    <variation>S</variation>
    <location>
        <position position="232"/>
    </location>
</feature>
<feature type="sequence conflict" description="In Ref. 3; AAA36514." evidence="6" ref="3">
    <original>D</original>
    <variation>Y</variation>
    <location>
        <position position="240"/>
    </location>
</feature>
<feature type="sequence conflict" description="In Ref. 3; AAA36514." evidence="6" ref="3">
    <original>I</original>
    <variation>M</variation>
    <location>
        <position position="288"/>
    </location>
</feature>
<name>PSG5_HUMAN</name>
<reference key="1">
    <citation type="journal article" date="1989" name="Biochem. Biophys. Res. Commun.">
        <title>A pregnancy-specific beta 1-glycoprotein, a CEA gene family member, expressed in a human promyelocytic leukemia cell line, HL-60: structures of protein, mRNA and gene.</title>
        <authorList>
            <person name="Oikawa S."/>
            <person name="Inuzuka C."/>
            <person name="Kuroki M."/>
            <person name="Matsuoka Y."/>
            <person name="Kosaki G."/>
            <person name="Nakazato H."/>
        </authorList>
    </citation>
    <scope>NUCLEOTIDE SEQUENCE [GENOMIC DNA / MRNA]</scope>
    <scope>VARIANTS VAL-18 AND HIS-227</scope>
    <source>
        <tissue>Placenta</tissue>
    </source>
</reference>
<reference key="2">
    <citation type="journal article" date="1991" name="Mol. Cell. Biochem.">
        <title>Characterization of new members of the pregnancy-specific beta 1-glycoprotein family.</title>
        <authorList>
            <person name="Chan W.Y."/>
            <person name="Zheng Q.X."/>
            <person name="McMahon J."/>
            <person name="Tease L.A."/>
        </authorList>
    </citation>
    <scope>NUCLEOTIDE SEQUENCE [MRNA]</scope>
    <scope>VARIANTS VAL-18; LYS-154 AND HIS-227</scope>
    <source>
        <tissue>Placenta</tissue>
    </source>
</reference>
<reference key="3">
    <citation type="journal article" date="1989" name="Biochem. Biophys. Res. Commun.">
        <title>Carcinoembryonic antigen gene family: molecular cloning of cDNA for a PS-beta-G/FL-NCA glycoprotein with a novel domain arrangement.</title>
        <authorList>
            <person name="Khan W.N."/>
            <person name="Hammarstroem S."/>
        </authorList>
    </citation>
    <scope>NUCLEOTIDE SEQUENCE [GENOMIC DNA]</scope>
    <scope>VARIANTS VAL-18; LYS-154 AND HIS-227</scope>
</reference>
<reference key="4">
    <citation type="journal article" date="2004" name="Nature">
        <title>The DNA sequence and biology of human chromosome 19.</title>
        <authorList>
            <person name="Grimwood J."/>
            <person name="Gordon L.A."/>
            <person name="Olsen A.S."/>
            <person name="Terry A."/>
            <person name="Schmutz J."/>
            <person name="Lamerdin J.E."/>
            <person name="Hellsten U."/>
            <person name="Goodstein D."/>
            <person name="Couronne O."/>
            <person name="Tran-Gyamfi M."/>
            <person name="Aerts A."/>
            <person name="Altherr M."/>
            <person name="Ashworth L."/>
            <person name="Bajorek E."/>
            <person name="Black S."/>
            <person name="Branscomb E."/>
            <person name="Caenepeel S."/>
            <person name="Carrano A.V."/>
            <person name="Caoile C."/>
            <person name="Chan Y.M."/>
            <person name="Christensen M."/>
            <person name="Cleland C.A."/>
            <person name="Copeland A."/>
            <person name="Dalin E."/>
            <person name="Dehal P."/>
            <person name="Denys M."/>
            <person name="Detter J.C."/>
            <person name="Escobar J."/>
            <person name="Flowers D."/>
            <person name="Fotopulos D."/>
            <person name="Garcia C."/>
            <person name="Georgescu A.M."/>
            <person name="Glavina T."/>
            <person name="Gomez M."/>
            <person name="Gonzales E."/>
            <person name="Groza M."/>
            <person name="Hammon N."/>
            <person name="Hawkins T."/>
            <person name="Haydu L."/>
            <person name="Ho I."/>
            <person name="Huang W."/>
            <person name="Israni S."/>
            <person name="Jett J."/>
            <person name="Kadner K."/>
            <person name="Kimball H."/>
            <person name="Kobayashi A."/>
            <person name="Larionov V."/>
            <person name="Leem S.-H."/>
            <person name="Lopez F."/>
            <person name="Lou Y."/>
            <person name="Lowry S."/>
            <person name="Malfatti S."/>
            <person name="Martinez D."/>
            <person name="McCready P.M."/>
            <person name="Medina C."/>
            <person name="Morgan J."/>
            <person name="Nelson K."/>
            <person name="Nolan M."/>
            <person name="Ovcharenko I."/>
            <person name="Pitluck S."/>
            <person name="Pollard M."/>
            <person name="Popkie A.P."/>
            <person name="Predki P."/>
            <person name="Quan G."/>
            <person name="Ramirez L."/>
            <person name="Rash S."/>
            <person name="Retterer J."/>
            <person name="Rodriguez A."/>
            <person name="Rogers S."/>
            <person name="Salamov A."/>
            <person name="Salazar A."/>
            <person name="She X."/>
            <person name="Smith D."/>
            <person name="Slezak T."/>
            <person name="Solovyev V."/>
            <person name="Thayer N."/>
            <person name="Tice H."/>
            <person name="Tsai M."/>
            <person name="Ustaszewska A."/>
            <person name="Vo N."/>
            <person name="Wagner M."/>
            <person name="Wheeler J."/>
            <person name="Wu K."/>
            <person name="Xie G."/>
            <person name="Yang J."/>
            <person name="Dubchak I."/>
            <person name="Furey T.S."/>
            <person name="DeJong P."/>
            <person name="Dickson M."/>
            <person name="Gordon D."/>
            <person name="Eichler E.E."/>
            <person name="Pennacchio L.A."/>
            <person name="Richardson P."/>
            <person name="Stubbs L."/>
            <person name="Rokhsar D.S."/>
            <person name="Myers R.M."/>
            <person name="Rubin E.M."/>
            <person name="Lucas S.M."/>
        </authorList>
    </citation>
    <scope>NUCLEOTIDE SEQUENCE [LARGE SCALE GENOMIC DNA]</scope>
</reference>
<reference key="5">
    <citation type="journal article" date="2004" name="Genome Res.">
        <title>The status, quality, and expansion of the NIH full-length cDNA project: the Mammalian Gene Collection (MGC).</title>
        <authorList>
            <consortium name="The MGC Project Team"/>
        </authorList>
    </citation>
    <scope>NUCLEOTIDE SEQUENCE [LARGE SCALE MRNA]</scope>
    <scope>VARIANTS VAL-18 AND HIS-227</scope>
    <source>
        <tissue>Placenta</tissue>
    </source>
</reference>
<reference key="6">
    <citation type="submission" date="1998-11" db="EMBL/GenBank/DDBJ databases">
        <title>Characterization of upstream promotor region, exon 1 and exon 2 of the PSG gene family.</title>
        <authorList>
            <person name="Fraengsmyr L."/>
            <person name="Teglund S."/>
            <person name="Israelsson A."/>
            <person name="Hammarstroem S."/>
        </authorList>
    </citation>
    <scope>NUCLEOTIDE SEQUENCE [GENOMIC DNA] OF 1-143</scope>
</reference>
<reference key="7">
    <citation type="journal article" date="2011" name="Sci. Signal.">
        <title>System-wide temporal characterization of the proteome and phosphoproteome of human embryonic stem cell differentiation.</title>
        <authorList>
            <person name="Rigbolt K.T."/>
            <person name="Prokhorova T.A."/>
            <person name="Akimov V."/>
            <person name="Henningsen J."/>
            <person name="Johansen P.T."/>
            <person name="Kratchmarova I."/>
            <person name="Kassem M."/>
            <person name="Mann M."/>
            <person name="Olsen J.V."/>
            <person name="Blagoev B."/>
        </authorList>
    </citation>
    <scope>IDENTIFICATION BY MASS SPECTROMETRY [LARGE SCALE ANALYSIS]</scope>
</reference>
<sequence length="335" mass="37713">MGPLSAPPCTQHITWKGLLLTASLLNFWNLPITAQVTIEALPPKVSEGKDVLLLVHNLPQNLAGYIWYKGQLMDLYHYITSYVVDGQINIYGPAYTGRETVYSNASLLIQNVTREDAGSYTLHIIKRGDRTRGVTGYFTFNLYLKLPKPYITINNSKPRENKDVLAFTCEPKSENYTYIWWLNGQSLPVSPRVKRPIENRILILPSVTRNETGPYECEIRDRDGGMRSDPVTLNVLYGPDLPSIYPSFTYYRSGENLYLSCFAESNPPAEYFWTINGKFQQSGQKLSIPQITTKHRGLYTCSVRNSATGKESSKSMTVEVSAPSGIGRLPLLNPI</sequence>
<keyword id="KW-1015">Disulfide bond</keyword>
<keyword id="KW-0325">Glycoprotein</keyword>
<keyword id="KW-0393">Immunoglobulin domain</keyword>
<keyword id="KW-1267">Proteomics identification</keyword>
<keyword id="KW-1185">Reference proteome</keyword>
<keyword id="KW-0677">Repeat</keyword>
<keyword id="KW-0964">Secreted</keyword>
<keyword id="KW-0732">Signal</keyword>
<organism>
    <name type="scientific">Homo sapiens</name>
    <name type="common">Human</name>
    <dbReference type="NCBI Taxonomy" id="9606"/>
    <lineage>
        <taxon>Eukaryota</taxon>
        <taxon>Metazoa</taxon>
        <taxon>Chordata</taxon>
        <taxon>Craniata</taxon>
        <taxon>Vertebrata</taxon>
        <taxon>Euteleostomi</taxon>
        <taxon>Mammalia</taxon>
        <taxon>Eutheria</taxon>
        <taxon>Euarchontoglires</taxon>
        <taxon>Primates</taxon>
        <taxon>Haplorrhini</taxon>
        <taxon>Catarrhini</taxon>
        <taxon>Hominidae</taxon>
        <taxon>Homo</taxon>
    </lineage>
</organism>
<proteinExistence type="evidence at protein level"/>
<accession>Q15238</accession>
<accession>Q15239</accession>
<accession>Q96QJ1</accession>
<accession>Q9UQ75</accession>
<gene>
    <name type="primary">PSG5</name>
</gene>